<proteinExistence type="evidence at transcript level"/>
<reference key="1">
    <citation type="journal article" date="1998" name="Curr. Genet.">
        <title>Isolation of the 3-phosphoglycerate kinase gene of the arbuscular mycorrhizal fungus Glomus mosseae (Nicol. &amp; Gerd.) Gerdemann &amp; Trappe.</title>
        <authorList>
            <person name="Harrier L.A."/>
            <person name="Wright F."/>
            <person name="Hooker J.E."/>
        </authorList>
    </citation>
    <scope>NUCLEOTIDE SEQUENCE [MRNA]</scope>
    <source>
        <strain>BEG 12</strain>
    </source>
</reference>
<gene>
    <name type="primary">PGK</name>
</gene>
<dbReference type="EC" id="2.7.2.3" evidence="4"/>
<dbReference type="EMBL" id="AF072893">
    <property type="protein sequence ID" value="AAD09406.1"/>
    <property type="molecule type" value="mRNA"/>
</dbReference>
<dbReference type="EMBL" id="AF074394">
    <property type="protein sequence ID" value="AAC26131.1"/>
    <property type="molecule type" value="mRNA"/>
</dbReference>
<dbReference type="SMR" id="O74233"/>
<dbReference type="UniPathway" id="UPA00109">
    <property type="reaction ID" value="UER00185"/>
</dbReference>
<dbReference type="GO" id="GO:0005829">
    <property type="term" value="C:cytosol"/>
    <property type="evidence" value="ECO:0007669"/>
    <property type="project" value="TreeGrafter"/>
</dbReference>
<dbReference type="GO" id="GO:0005739">
    <property type="term" value="C:mitochondrion"/>
    <property type="evidence" value="ECO:0007669"/>
    <property type="project" value="UniProtKB-SubCell"/>
</dbReference>
<dbReference type="GO" id="GO:0043531">
    <property type="term" value="F:ADP binding"/>
    <property type="evidence" value="ECO:0007669"/>
    <property type="project" value="TreeGrafter"/>
</dbReference>
<dbReference type="GO" id="GO:0005524">
    <property type="term" value="F:ATP binding"/>
    <property type="evidence" value="ECO:0007669"/>
    <property type="project" value="UniProtKB-KW"/>
</dbReference>
<dbReference type="GO" id="GO:0046872">
    <property type="term" value="F:metal ion binding"/>
    <property type="evidence" value="ECO:0007669"/>
    <property type="project" value="UniProtKB-KW"/>
</dbReference>
<dbReference type="GO" id="GO:0004618">
    <property type="term" value="F:phosphoglycerate kinase activity"/>
    <property type="evidence" value="ECO:0007669"/>
    <property type="project" value="UniProtKB-EC"/>
</dbReference>
<dbReference type="GO" id="GO:0006094">
    <property type="term" value="P:gluconeogenesis"/>
    <property type="evidence" value="ECO:0007669"/>
    <property type="project" value="TreeGrafter"/>
</dbReference>
<dbReference type="GO" id="GO:0006096">
    <property type="term" value="P:glycolytic process"/>
    <property type="evidence" value="ECO:0007669"/>
    <property type="project" value="UniProtKB-UniPathway"/>
</dbReference>
<dbReference type="CDD" id="cd00318">
    <property type="entry name" value="Phosphoglycerate_kinase"/>
    <property type="match status" value="1"/>
</dbReference>
<dbReference type="FunFam" id="3.40.50.1260:FF:000003">
    <property type="entry name" value="Phosphoglycerate kinase"/>
    <property type="match status" value="1"/>
</dbReference>
<dbReference type="FunFam" id="3.40.50.1260:FF:000019">
    <property type="entry name" value="Phosphoglycerate kinase 1"/>
    <property type="match status" value="1"/>
</dbReference>
<dbReference type="Gene3D" id="3.40.50.1260">
    <property type="entry name" value="Phosphoglycerate kinase, N-terminal domain"/>
    <property type="match status" value="3"/>
</dbReference>
<dbReference type="HAMAP" id="MF_00145">
    <property type="entry name" value="Phosphoglyc_kinase"/>
    <property type="match status" value="1"/>
</dbReference>
<dbReference type="InterPro" id="IPR001576">
    <property type="entry name" value="Phosphoglycerate_kinase"/>
</dbReference>
<dbReference type="InterPro" id="IPR015911">
    <property type="entry name" value="Phosphoglycerate_kinase_CS"/>
</dbReference>
<dbReference type="InterPro" id="IPR015824">
    <property type="entry name" value="Phosphoglycerate_kinase_N"/>
</dbReference>
<dbReference type="InterPro" id="IPR036043">
    <property type="entry name" value="Phosphoglycerate_kinase_sf"/>
</dbReference>
<dbReference type="PANTHER" id="PTHR11406">
    <property type="entry name" value="PHOSPHOGLYCERATE KINASE"/>
    <property type="match status" value="1"/>
</dbReference>
<dbReference type="PANTHER" id="PTHR11406:SF0">
    <property type="entry name" value="PHOSPHOGLYCERATE KINASE"/>
    <property type="match status" value="1"/>
</dbReference>
<dbReference type="Pfam" id="PF00162">
    <property type="entry name" value="PGK"/>
    <property type="match status" value="1"/>
</dbReference>
<dbReference type="PIRSF" id="PIRSF000724">
    <property type="entry name" value="Pgk"/>
    <property type="match status" value="1"/>
</dbReference>
<dbReference type="PRINTS" id="PR00477">
    <property type="entry name" value="PHGLYCKINASE"/>
</dbReference>
<dbReference type="SUPFAM" id="SSF53748">
    <property type="entry name" value="Phosphoglycerate kinase"/>
    <property type="match status" value="1"/>
</dbReference>
<dbReference type="PROSITE" id="PS00111">
    <property type="entry name" value="PGLYCERATE_KINASE"/>
    <property type="match status" value="1"/>
</dbReference>
<accession>O74233</accession>
<feature type="chain" id="PRO_0000145881" description="Phosphoglycerate kinase">
    <location>
        <begin position="1"/>
        <end position="416"/>
    </location>
</feature>
<feature type="binding site" evidence="3">
    <location>
        <position position="23"/>
    </location>
    <ligand>
        <name>(2R)-3-phosphoglycerate</name>
        <dbReference type="ChEBI" id="CHEBI:58272"/>
    </ligand>
</feature>
<feature type="binding site" evidence="5">
    <location>
        <position position="24"/>
    </location>
    <ligand>
        <name>(2R)-3-phosphoglycerate</name>
        <dbReference type="ChEBI" id="CHEBI:58272"/>
    </ligand>
</feature>
<feature type="binding site" evidence="3">
    <location>
        <position position="25"/>
    </location>
    <ligand>
        <name>(2R)-3-phosphoglycerate</name>
        <dbReference type="ChEBI" id="CHEBI:58272"/>
    </ligand>
</feature>
<feature type="binding site" evidence="5">
    <location>
        <position position="26"/>
    </location>
    <ligand>
        <name>(2R)-3-phosphoglycerate</name>
        <dbReference type="ChEBI" id="CHEBI:58272"/>
    </ligand>
</feature>
<feature type="binding site" evidence="3">
    <location>
        <position position="38"/>
    </location>
    <ligand>
        <name>(2R)-3-phosphoglycerate</name>
        <dbReference type="ChEBI" id="CHEBI:58272"/>
    </ligand>
</feature>
<feature type="binding site" evidence="5">
    <location>
        <position position="39"/>
    </location>
    <ligand>
        <name>(2R)-3-phosphoglycerate</name>
        <dbReference type="ChEBI" id="CHEBI:58272"/>
    </ligand>
</feature>
<feature type="binding site" evidence="3">
    <location>
        <position position="62"/>
    </location>
    <ligand>
        <name>(2R)-3-phosphoglycerate</name>
        <dbReference type="ChEBI" id="CHEBI:58272"/>
    </ligand>
</feature>
<feature type="binding site" evidence="5">
    <location>
        <position position="63"/>
    </location>
    <ligand>
        <name>(2R)-3-phosphoglycerate</name>
        <dbReference type="ChEBI" id="CHEBI:58272"/>
    </ligand>
</feature>
<feature type="binding site" evidence="3">
    <location>
        <position position="65"/>
    </location>
    <ligand>
        <name>(2R)-3-phosphoglycerate</name>
        <dbReference type="ChEBI" id="CHEBI:58272"/>
    </ligand>
</feature>
<feature type="binding site" evidence="5">
    <location>
        <position position="66"/>
    </location>
    <ligand>
        <name>(2R)-3-phosphoglycerate</name>
        <dbReference type="ChEBI" id="CHEBI:58272"/>
    </ligand>
</feature>
<feature type="binding site" evidence="3">
    <location>
        <position position="121"/>
    </location>
    <ligand>
        <name>(2R)-3-phosphoglycerate</name>
        <dbReference type="ChEBI" id="CHEBI:58272"/>
    </ligand>
</feature>
<feature type="binding site" evidence="5">
    <location>
        <position position="122"/>
    </location>
    <ligand>
        <name>(2R)-3-phosphoglycerate</name>
        <dbReference type="ChEBI" id="CHEBI:58272"/>
    </ligand>
</feature>
<feature type="binding site" evidence="3">
    <location>
        <position position="169"/>
    </location>
    <ligand>
        <name>(2R)-3-phosphoglycerate</name>
        <dbReference type="ChEBI" id="CHEBI:58272"/>
    </ligand>
</feature>
<feature type="binding site" evidence="5">
    <location>
        <position position="170"/>
    </location>
    <ligand>
        <name>(2R)-3-phosphoglycerate</name>
        <dbReference type="ChEBI" id="CHEBI:58272"/>
    </ligand>
</feature>
<feature type="binding site" evidence="3">
    <location>
        <position position="213"/>
    </location>
    <ligand>
        <name>ADP</name>
        <dbReference type="ChEBI" id="CHEBI:456216"/>
    </ligand>
</feature>
<feature type="binding site" evidence="3">
    <location>
        <position position="213"/>
    </location>
    <ligand>
        <name>CDP</name>
        <dbReference type="ChEBI" id="CHEBI:58069"/>
    </ligand>
</feature>
<feature type="binding site" evidence="5">
    <location>
        <position position="214"/>
    </location>
    <ligand>
        <name>AMP</name>
        <dbReference type="ChEBI" id="CHEBI:456215"/>
    </ligand>
</feature>
<feature type="binding site" evidence="5">
    <location>
        <position position="214"/>
    </location>
    <ligand>
        <name>ATP</name>
        <dbReference type="ChEBI" id="CHEBI:30616"/>
    </ligand>
</feature>
<feature type="binding site" evidence="3">
    <location>
        <position position="214"/>
    </location>
    <ligand>
        <name>Mg(2+)</name>
        <dbReference type="ChEBI" id="CHEBI:18420"/>
    </ligand>
</feature>
<feature type="binding site" evidence="5">
    <location>
        <position position="215"/>
    </location>
    <ligand>
        <name>AMP</name>
        <dbReference type="ChEBI" id="CHEBI:456215"/>
    </ligand>
</feature>
<feature type="binding site" evidence="3">
    <location>
        <position position="218"/>
    </location>
    <ligand>
        <name>CDP</name>
        <dbReference type="ChEBI" id="CHEBI:58069"/>
    </ligand>
</feature>
<feature type="binding site" evidence="3">
    <location>
        <position position="218"/>
    </location>
    <ligand>
        <name>Mg(2+)</name>
        <dbReference type="ChEBI" id="CHEBI:18420"/>
    </ligand>
</feature>
<feature type="binding site" evidence="5">
    <location>
        <position position="219"/>
    </location>
    <ligand>
        <name>AMP</name>
        <dbReference type="ChEBI" id="CHEBI:456215"/>
    </ligand>
</feature>
<feature type="binding site" evidence="5">
    <location>
        <position position="219"/>
    </location>
    <ligand>
        <name>ATP</name>
        <dbReference type="ChEBI" id="CHEBI:30616"/>
    </ligand>
</feature>
<feature type="binding site" evidence="3">
    <location>
        <position position="237"/>
    </location>
    <ligand>
        <name>ADP</name>
        <dbReference type="ChEBI" id="CHEBI:456216"/>
    </ligand>
</feature>
<feature type="binding site" evidence="3">
    <location>
        <position position="237"/>
    </location>
    <ligand>
        <name>CDP</name>
        <dbReference type="ChEBI" id="CHEBI:58069"/>
    </ligand>
</feature>
<feature type="binding site" evidence="5">
    <location>
        <position position="238"/>
    </location>
    <ligand>
        <name>AMP</name>
        <dbReference type="ChEBI" id="CHEBI:456215"/>
    </ligand>
</feature>
<feature type="binding site" evidence="5">
    <location>
        <position position="238"/>
    </location>
    <ligand>
        <name>ATP</name>
        <dbReference type="ChEBI" id="CHEBI:30616"/>
    </ligand>
</feature>
<feature type="binding site" evidence="5">
    <location>
        <position position="312"/>
    </location>
    <ligand>
        <name>AMP</name>
        <dbReference type="ChEBI" id="CHEBI:456215"/>
    </ligand>
</feature>
<feature type="binding site" evidence="5">
    <location>
        <position position="312"/>
    </location>
    <ligand>
        <name>ATP</name>
        <dbReference type="ChEBI" id="CHEBI:30616"/>
    </ligand>
</feature>
<feature type="binding site" evidence="3">
    <location>
        <position position="337"/>
    </location>
    <ligand>
        <name>CDP</name>
        <dbReference type="ChEBI" id="CHEBI:58069"/>
    </ligand>
</feature>
<feature type="binding site" evidence="3">
    <location>
        <position position="339"/>
    </location>
    <ligand>
        <name>CDP</name>
        <dbReference type="ChEBI" id="CHEBI:58069"/>
    </ligand>
</feature>
<feature type="binding site" evidence="3">
    <location>
        <position position="342"/>
    </location>
    <ligand>
        <name>ADP</name>
        <dbReference type="ChEBI" id="CHEBI:456216"/>
    </ligand>
</feature>
<feature type="binding site" evidence="3">
    <location>
        <position position="342"/>
    </location>
    <ligand>
        <name>CDP</name>
        <dbReference type="ChEBI" id="CHEBI:58069"/>
    </ligand>
</feature>
<feature type="binding site" evidence="5">
    <location>
        <position position="343"/>
    </location>
    <ligand>
        <name>AMP</name>
        <dbReference type="ChEBI" id="CHEBI:456215"/>
    </ligand>
</feature>
<feature type="binding site" evidence="5">
    <location>
        <position position="343"/>
    </location>
    <ligand>
        <name>ATP</name>
        <dbReference type="ChEBI" id="CHEBI:30616"/>
    </ligand>
</feature>
<feature type="binding site" evidence="5">
    <location>
        <position position="374"/>
    </location>
    <ligand>
        <name>ATP</name>
        <dbReference type="ChEBI" id="CHEBI:30616"/>
    </ligand>
</feature>
<feature type="binding site" evidence="5">
    <location>
        <position position="374"/>
    </location>
    <ligand>
        <name>Mg(2+)</name>
        <dbReference type="ChEBI" id="CHEBI:18420"/>
    </ligand>
</feature>
<feature type="binding site" evidence="5">
    <location>
        <position position="375"/>
    </location>
    <ligand>
        <name>ATP</name>
        <dbReference type="ChEBI" id="CHEBI:30616"/>
    </ligand>
</feature>
<protein>
    <recommendedName>
        <fullName>Phosphoglycerate kinase</fullName>
        <ecNumber evidence="4">2.7.2.3</ecNumber>
    </recommendedName>
</protein>
<comment type="function">
    <text evidence="2 3 4">Catalyzes one of the two ATP producing reactions in the glycolytic pathway via the reversible conversion of 1,3-diphosphoglycerate to 3-phosphoglycerate (By similarity). Both L- and D- forms of purine and pyrimidine nucleotides can be used as substrates, but the activity is much lower on pyrimidines (By similarity). Negatively regulates the biosynthesis of acetyl-CoA from pyruvate in the mitochondrion (By similarity).</text>
</comment>
<comment type="catalytic activity">
    <reaction evidence="4">
        <text>(2R)-3-phosphoglycerate + ATP = (2R)-3-phospho-glyceroyl phosphate + ADP</text>
        <dbReference type="Rhea" id="RHEA:14801"/>
        <dbReference type="ChEBI" id="CHEBI:30616"/>
        <dbReference type="ChEBI" id="CHEBI:57604"/>
        <dbReference type="ChEBI" id="CHEBI:58272"/>
        <dbReference type="ChEBI" id="CHEBI:456216"/>
        <dbReference type="EC" id="2.7.2.3"/>
    </reaction>
</comment>
<comment type="cofactor">
    <cofactor evidence="3">
        <name>Mg(2+)</name>
        <dbReference type="ChEBI" id="CHEBI:18420"/>
    </cofactor>
</comment>
<comment type="pathway">
    <text evidence="4">Carbohydrate degradation; glycolysis; pyruvate from D-glyceraldehyde 3-phosphate: step 2/5.</text>
</comment>
<comment type="subunit">
    <text evidence="1">Monomer.</text>
</comment>
<comment type="subcellular location">
    <subcellularLocation>
        <location evidence="4">Cytoplasm</location>
    </subcellularLocation>
    <subcellularLocation>
        <location evidence="4">Mitochondrion</location>
    </subcellularLocation>
</comment>
<comment type="similarity">
    <text evidence="6">Belongs to the phosphoglycerate kinase family.</text>
</comment>
<sequence>MSLSNKLSIRDLNVKDKRVLIRVDFNVPLDGTTITNNQRIVAALPTIKYALEQKAKTVVLMSHLGRPDGKKVDKYSLAPVAKEVERLLGKKVTFLEDCVGEGVENYVKNACDGEVILLENLRFHAEEEGSSKGPDGKKVKADLEKVKEFRRSLTALGDVYINDAFGTAHRAHSSMVGVELPQKAAGFLVKKELEYFAKALESPERPFLAILGGAKVSDKIQLIDNLIAKVDSLIICGGMAFTFKKTLENVKIGNSLFDADGAKTVGEVMEKAKKHDVEVVLPVDYITADKFAKDAQVGYATDQEGIPDGWMGLDCGEKSVELYKQTIAKAKTILWNGPAGVFEFDNFAKGTKATLDCAVEAAQSGKIVIIGGGDTATVAAKYGVEDKLSHVSTGGGASLELLEGKDLPGVSALSSK</sequence>
<evidence type="ECO:0000250" key="1"/>
<evidence type="ECO:0000250" key="2">
    <source>
        <dbReference type="UniProtKB" id="A0A7G5KET3"/>
    </source>
</evidence>
<evidence type="ECO:0000250" key="3">
    <source>
        <dbReference type="UniProtKB" id="P00558"/>
    </source>
</evidence>
<evidence type="ECO:0000250" key="4">
    <source>
        <dbReference type="UniProtKB" id="P00560"/>
    </source>
</evidence>
<evidence type="ECO:0000250" key="5">
    <source>
        <dbReference type="UniProtKB" id="Q7SIB7"/>
    </source>
</evidence>
<evidence type="ECO:0000305" key="6"/>
<name>PGK_FUNMO</name>
<keyword id="KW-0067">ATP-binding</keyword>
<keyword id="KW-0963">Cytoplasm</keyword>
<keyword id="KW-0324">Glycolysis</keyword>
<keyword id="KW-0418">Kinase</keyword>
<keyword id="KW-0460">Magnesium</keyword>
<keyword id="KW-0479">Metal-binding</keyword>
<keyword id="KW-0496">Mitochondrion</keyword>
<keyword id="KW-0547">Nucleotide-binding</keyword>
<keyword id="KW-0808">Transferase</keyword>
<organism>
    <name type="scientific">Funneliformis mosseae</name>
    <name type="common">Endomycorrhizal fungus</name>
    <name type="synonym">Glomus mosseae</name>
    <dbReference type="NCBI Taxonomy" id="27381"/>
    <lineage>
        <taxon>Eukaryota</taxon>
        <taxon>Fungi</taxon>
        <taxon>Fungi incertae sedis</taxon>
        <taxon>Mucoromycota</taxon>
        <taxon>Glomeromycotina</taxon>
        <taxon>Glomeromycetes</taxon>
        <taxon>Glomerales</taxon>
        <taxon>Glomeraceae</taxon>
        <taxon>Funneliformis</taxon>
    </lineage>
</organism>